<gene>
    <name evidence="2" type="primary">infB</name>
    <name type="ordered locus">RB5504</name>
</gene>
<evidence type="ECO:0000250" key="1"/>
<evidence type="ECO:0000255" key="2">
    <source>
        <dbReference type="HAMAP-Rule" id="MF_00100"/>
    </source>
</evidence>
<evidence type="ECO:0000256" key="3">
    <source>
        <dbReference type="SAM" id="MobiDB-lite"/>
    </source>
</evidence>
<organism>
    <name type="scientific">Rhodopirellula baltica (strain DSM 10527 / NCIMB 13988 / SH1)</name>
    <dbReference type="NCBI Taxonomy" id="243090"/>
    <lineage>
        <taxon>Bacteria</taxon>
        <taxon>Pseudomonadati</taxon>
        <taxon>Planctomycetota</taxon>
        <taxon>Planctomycetia</taxon>
        <taxon>Pirellulales</taxon>
        <taxon>Pirellulaceae</taxon>
        <taxon>Rhodopirellula</taxon>
    </lineage>
</organism>
<dbReference type="EMBL" id="BX294142">
    <property type="protein sequence ID" value="CAD74278.1"/>
    <property type="molecule type" value="Genomic_DNA"/>
</dbReference>
<dbReference type="RefSeq" id="NP_866738.1">
    <property type="nucleotide sequence ID" value="NC_005027.1"/>
</dbReference>
<dbReference type="RefSeq" id="WP_011120484.1">
    <property type="nucleotide sequence ID" value="NC_005027.1"/>
</dbReference>
<dbReference type="SMR" id="Q7URR0"/>
<dbReference type="FunCoup" id="Q7URR0">
    <property type="interactions" value="572"/>
</dbReference>
<dbReference type="STRING" id="243090.RB5504"/>
<dbReference type="EnsemblBacteria" id="CAD74278">
    <property type="protein sequence ID" value="CAD74278"/>
    <property type="gene ID" value="RB5504"/>
</dbReference>
<dbReference type="KEGG" id="rba:RB5504"/>
<dbReference type="PATRIC" id="fig|243090.15.peg.2647"/>
<dbReference type="eggNOG" id="COG0532">
    <property type="taxonomic scope" value="Bacteria"/>
</dbReference>
<dbReference type="HOGENOM" id="CLU_006301_5_1_0"/>
<dbReference type="InParanoid" id="Q7URR0"/>
<dbReference type="OrthoDB" id="9811804at2"/>
<dbReference type="Proteomes" id="UP000001025">
    <property type="component" value="Chromosome"/>
</dbReference>
<dbReference type="GO" id="GO:0005737">
    <property type="term" value="C:cytoplasm"/>
    <property type="evidence" value="ECO:0000318"/>
    <property type="project" value="GO_Central"/>
</dbReference>
<dbReference type="GO" id="GO:0005829">
    <property type="term" value="C:cytosol"/>
    <property type="evidence" value="ECO:0000318"/>
    <property type="project" value="GO_Central"/>
</dbReference>
<dbReference type="GO" id="GO:0005525">
    <property type="term" value="F:GTP binding"/>
    <property type="evidence" value="ECO:0007669"/>
    <property type="project" value="UniProtKB-KW"/>
</dbReference>
<dbReference type="GO" id="GO:0003924">
    <property type="term" value="F:GTPase activity"/>
    <property type="evidence" value="ECO:0007669"/>
    <property type="project" value="UniProtKB-UniRule"/>
</dbReference>
<dbReference type="GO" id="GO:0003743">
    <property type="term" value="F:translation initiation factor activity"/>
    <property type="evidence" value="ECO:0000318"/>
    <property type="project" value="GO_Central"/>
</dbReference>
<dbReference type="GO" id="GO:0006413">
    <property type="term" value="P:translational initiation"/>
    <property type="evidence" value="ECO:0000318"/>
    <property type="project" value="GO_Central"/>
</dbReference>
<dbReference type="CDD" id="cd01887">
    <property type="entry name" value="IF2_eIF5B"/>
    <property type="match status" value="1"/>
</dbReference>
<dbReference type="CDD" id="cd03702">
    <property type="entry name" value="IF2_mtIF2_II"/>
    <property type="match status" value="1"/>
</dbReference>
<dbReference type="CDD" id="cd03692">
    <property type="entry name" value="mtIF2_IVc"/>
    <property type="match status" value="1"/>
</dbReference>
<dbReference type="FunFam" id="2.40.30.10:FF:000008">
    <property type="entry name" value="Translation initiation factor IF-2"/>
    <property type="match status" value="1"/>
</dbReference>
<dbReference type="FunFam" id="2.40.30.10:FF:000054">
    <property type="entry name" value="Translation initiation factor IF-2"/>
    <property type="match status" value="1"/>
</dbReference>
<dbReference type="FunFam" id="3.40.50.10050:FF:000001">
    <property type="entry name" value="Translation initiation factor IF-2"/>
    <property type="match status" value="1"/>
</dbReference>
<dbReference type="FunFam" id="3.40.50.300:FF:000019">
    <property type="entry name" value="Translation initiation factor IF-2"/>
    <property type="match status" value="1"/>
</dbReference>
<dbReference type="Gene3D" id="1.10.10.2480">
    <property type="match status" value="1"/>
</dbReference>
<dbReference type="Gene3D" id="3.40.50.300">
    <property type="entry name" value="P-loop containing nucleotide triphosphate hydrolases"/>
    <property type="match status" value="1"/>
</dbReference>
<dbReference type="Gene3D" id="2.40.30.10">
    <property type="entry name" value="Translation factors"/>
    <property type="match status" value="2"/>
</dbReference>
<dbReference type="Gene3D" id="3.40.50.10050">
    <property type="entry name" value="Translation initiation factor IF- 2, domain 3"/>
    <property type="match status" value="1"/>
</dbReference>
<dbReference type="HAMAP" id="MF_00100_B">
    <property type="entry name" value="IF_2_B"/>
    <property type="match status" value="1"/>
</dbReference>
<dbReference type="InterPro" id="IPR053905">
    <property type="entry name" value="EF-G-like_DII"/>
</dbReference>
<dbReference type="InterPro" id="IPR044145">
    <property type="entry name" value="IF2_II"/>
</dbReference>
<dbReference type="InterPro" id="IPR006847">
    <property type="entry name" value="IF2_N"/>
</dbReference>
<dbReference type="InterPro" id="IPR027417">
    <property type="entry name" value="P-loop_NTPase"/>
</dbReference>
<dbReference type="InterPro" id="IPR005225">
    <property type="entry name" value="Small_GTP-bd"/>
</dbReference>
<dbReference type="InterPro" id="IPR000795">
    <property type="entry name" value="T_Tr_GTP-bd_dom"/>
</dbReference>
<dbReference type="InterPro" id="IPR000178">
    <property type="entry name" value="TF_IF2_bacterial-like"/>
</dbReference>
<dbReference type="InterPro" id="IPR015760">
    <property type="entry name" value="TIF_IF2"/>
</dbReference>
<dbReference type="InterPro" id="IPR023115">
    <property type="entry name" value="TIF_IF2_dom3"/>
</dbReference>
<dbReference type="InterPro" id="IPR036925">
    <property type="entry name" value="TIF_IF2_dom3_sf"/>
</dbReference>
<dbReference type="InterPro" id="IPR009000">
    <property type="entry name" value="Transl_B-barrel_sf"/>
</dbReference>
<dbReference type="NCBIfam" id="TIGR00487">
    <property type="entry name" value="IF-2"/>
    <property type="match status" value="1"/>
</dbReference>
<dbReference type="NCBIfam" id="TIGR00231">
    <property type="entry name" value="small_GTP"/>
    <property type="match status" value="1"/>
</dbReference>
<dbReference type="PANTHER" id="PTHR43381:SF5">
    <property type="entry name" value="TR-TYPE G DOMAIN-CONTAINING PROTEIN"/>
    <property type="match status" value="1"/>
</dbReference>
<dbReference type="PANTHER" id="PTHR43381">
    <property type="entry name" value="TRANSLATION INITIATION FACTOR IF-2-RELATED"/>
    <property type="match status" value="1"/>
</dbReference>
<dbReference type="Pfam" id="PF22042">
    <property type="entry name" value="EF-G_D2"/>
    <property type="match status" value="1"/>
</dbReference>
<dbReference type="Pfam" id="PF00009">
    <property type="entry name" value="GTP_EFTU"/>
    <property type="match status" value="1"/>
</dbReference>
<dbReference type="Pfam" id="PF11987">
    <property type="entry name" value="IF-2"/>
    <property type="match status" value="1"/>
</dbReference>
<dbReference type="Pfam" id="PF04760">
    <property type="entry name" value="IF2_N"/>
    <property type="match status" value="2"/>
</dbReference>
<dbReference type="SUPFAM" id="SSF52156">
    <property type="entry name" value="Initiation factor IF2/eIF5b, domain 3"/>
    <property type="match status" value="1"/>
</dbReference>
<dbReference type="SUPFAM" id="SSF52540">
    <property type="entry name" value="P-loop containing nucleoside triphosphate hydrolases"/>
    <property type="match status" value="1"/>
</dbReference>
<dbReference type="SUPFAM" id="SSF50447">
    <property type="entry name" value="Translation proteins"/>
    <property type="match status" value="2"/>
</dbReference>
<dbReference type="PROSITE" id="PS51722">
    <property type="entry name" value="G_TR_2"/>
    <property type="match status" value="1"/>
</dbReference>
<proteinExistence type="inferred from homology"/>
<feature type="chain" id="PRO_0000137242" description="Translation initiation factor IF-2">
    <location>
        <begin position="1"/>
        <end position="1038"/>
    </location>
</feature>
<feature type="domain" description="tr-type G">
    <location>
        <begin position="529"/>
        <end position="696"/>
    </location>
</feature>
<feature type="region of interest" description="Disordered" evidence="3">
    <location>
        <begin position="32"/>
        <end position="442"/>
    </location>
</feature>
<feature type="region of interest" description="G1" evidence="1">
    <location>
        <begin position="538"/>
        <end position="545"/>
    </location>
</feature>
<feature type="region of interest" description="G2" evidence="1">
    <location>
        <begin position="563"/>
        <end position="567"/>
    </location>
</feature>
<feature type="region of interest" description="G3" evidence="1">
    <location>
        <begin position="584"/>
        <end position="587"/>
    </location>
</feature>
<feature type="region of interest" description="G4" evidence="1">
    <location>
        <begin position="638"/>
        <end position="641"/>
    </location>
</feature>
<feature type="region of interest" description="G5" evidence="1">
    <location>
        <begin position="674"/>
        <end position="676"/>
    </location>
</feature>
<feature type="compositionally biased region" description="Low complexity" evidence="3">
    <location>
        <begin position="65"/>
        <end position="77"/>
    </location>
</feature>
<feature type="compositionally biased region" description="Low complexity" evidence="3">
    <location>
        <begin position="100"/>
        <end position="113"/>
    </location>
</feature>
<feature type="compositionally biased region" description="Low complexity" evidence="3">
    <location>
        <begin position="131"/>
        <end position="147"/>
    </location>
</feature>
<feature type="compositionally biased region" description="Basic and acidic residues" evidence="3">
    <location>
        <begin position="204"/>
        <end position="217"/>
    </location>
</feature>
<feature type="compositionally biased region" description="Basic and acidic residues" evidence="3">
    <location>
        <begin position="275"/>
        <end position="295"/>
    </location>
</feature>
<feature type="compositionally biased region" description="Low complexity" evidence="3">
    <location>
        <begin position="311"/>
        <end position="328"/>
    </location>
</feature>
<feature type="compositionally biased region" description="Basic and acidic residues" evidence="3">
    <location>
        <begin position="331"/>
        <end position="344"/>
    </location>
</feature>
<feature type="compositionally biased region" description="Basic residues" evidence="3">
    <location>
        <begin position="422"/>
        <end position="435"/>
    </location>
</feature>
<feature type="binding site" evidence="2">
    <location>
        <begin position="538"/>
        <end position="545"/>
    </location>
    <ligand>
        <name>GTP</name>
        <dbReference type="ChEBI" id="CHEBI:37565"/>
    </ligand>
</feature>
<feature type="binding site" evidence="2">
    <location>
        <begin position="584"/>
        <end position="588"/>
    </location>
    <ligand>
        <name>GTP</name>
        <dbReference type="ChEBI" id="CHEBI:37565"/>
    </ligand>
</feature>
<feature type="binding site" evidence="2">
    <location>
        <begin position="638"/>
        <end position="641"/>
    </location>
    <ligand>
        <name>GTP</name>
        <dbReference type="ChEBI" id="CHEBI:37565"/>
    </ligand>
</feature>
<protein>
    <recommendedName>
        <fullName evidence="2">Translation initiation factor IF-2</fullName>
    </recommendedName>
</protein>
<name>IF2_RHOBA</name>
<reference key="1">
    <citation type="journal article" date="2003" name="Proc. Natl. Acad. Sci. U.S.A.">
        <title>Complete genome sequence of the marine planctomycete Pirellula sp. strain 1.</title>
        <authorList>
            <person name="Gloeckner F.O."/>
            <person name="Kube M."/>
            <person name="Bauer M."/>
            <person name="Teeling H."/>
            <person name="Lombardot T."/>
            <person name="Ludwig W."/>
            <person name="Gade D."/>
            <person name="Beck A."/>
            <person name="Borzym K."/>
            <person name="Heitmann K."/>
            <person name="Rabus R."/>
            <person name="Schlesner H."/>
            <person name="Amann R."/>
            <person name="Reinhardt R."/>
        </authorList>
    </citation>
    <scope>NUCLEOTIDE SEQUENCE [LARGE SCALE GENOMIC DNA]</scope>
    <source>
        <strain>DSM 10527 / NCIMB 13988 / SH1</strain>
    </source>
</reference>
<accession>Q7URR0</accession>
<sequence>MPVRIYALAKELNLDSKELVDVVKKAGITGKGSALASLSDEEAQQVRGHLAGSAAKSEPKPKAAPPTKDTPTAPVAPVRDLSGATGRKPSAINVGRPSKPAEAADNPNAPAQPIRDGGRPVGKPAPIVRTPKLAPAPEAKAPEAPAADGSPKPEIRLPKTGGVGTGMASPSGRGIGMGAKTDGQSTKPESAASAPSVPGPKSDSGGRKAPESPKRESAPVASSDDDGSSNKGGGLASRIAGRMGNNSSGRVVPNTPGTPLSAVRRDSASAGGKMRSLDRSRNRPEEAAKAGDAGKSKKREPRIKVNLAQLPSAPAKPAAPTGSSGPAAQKPDIKLTRDVIEGHKQGMKAPLARLEQDEADKKQRSKKTAEGTVGLAGRGKRVIDEDEKPKKKGLAGMASARAERQRGGGGRRIVGSDGGDRHHYRRSRPRIRRKGVNTAAPRKEKVQIELPCTVRNFCEGSGLSVADVMRTLMGMGMMVNINADIDFETAELLATEHDLDIELKAAESLEQELITEIEETADDPDTLVARPPVVTFLGHVDHGKTSLLDHLVGINVVKGEAGGITQHIRAYKIDKDGRAVTFVDTPGHEAFTEMRARGANVTDIAVLVVAADDGIMPQTEEAISHAKAAEVPIVVALNKIDLEGVDANRVMTQLTEHQLTPSEWGGDVEIVRTSATQGTGMDELLDTLLTIAELNEYSANPNRSALGVCLESEQQGDRGVVAKLIVQNGTLRVGDILVCGPAHGRVRAMQDTLTGKPITEAGPSTPVSLMGLDTPPGAGDRFHVLKDISQAREIASAREGESSRQSLSGITTKVSFDSFQEMLEDGKLGESADTVKLNLIIRADARGSLEAIDKELSKFDHPEVEIRVLQRSVGGISLADATLASASDAVILGFNVIPDDKARSLAEERGVEIRRYDVIYKLTDDIRALIEGRLKPEERVVELGRALVKQVFSISRVGTIAGCYVAQGSIQRNCRIRVNRDGRTIGDYQLDTLRRIKEDVKEVPRGMECGIRLQGFNDIKQDDVLEAYKIEEVARKLD</sequence>
<keyword id="KW-0963">Cytoplasm</keyword>
<keyword id="KW-0342">GTP-binding</keyword>
<keyword id="KW-0396">Initiation factor</keyword>
<keyword id="KW-0547">Nucleotide-binding</keyword>
<keyword id="KW-0648">Protein biosynthesis</keyword>
<keyword id="KW-1185">Reference proteome</keyword>
<comment type="function">
    <text evidence="2">One of the essential components for the initiation of protein synthesis. Protects formylmethionyl-tRNA from spontaneous hydrolysis and promotes its binding to the 30S ribosomal subunits. Also involved in the hydrolysis of GTP during the formation of the 70S ribosomal complex.</text>
</comment>
<comment type="subcellular location">
    <subcellularLocation>
        <location evidence="2">Cytoplasm</location>
    </subcellularLocation>
</comment>
<comment type="similarity">
    <text evidence="2">Belongs to the TRAFAC class translation factor GTPase superfamily. Classic translation factor GTPase family. IF-2 subfamily.</text>
</comment>